<proteinExistence type="evidence at transcript level"/>
<accession>Q9TTW3</accession>
<sequence>MAKLLQPSPKFLPEEWHIANKNQYHRAEAQRSRSERLVAESQRLVDEIEKTTRKSQSDVNKKLEQRLEEVRFWKKELDDKLEQLVCTTEDLLTYQTRLQNALESLKEPLHITQMCLEYRDKRIGIDLVHDEVEQELLKEAEVIHGVMALLTRTMDEVTEQIRLNRSAKYNLEKDLKDKFVALTIDDVCFSLNNNSPGIYYSDSVVRVEPHSVSLEDWLDFSNTNVEKANRQRNNSLALKALVDRILSQTADDLRRQCDMVDTAFQMGLKETKAARDQLAAHLAKVMEEIACQEKNMTVLEKAILDQEGPAKVAHTRLETRTRRPNVELCRDVAQYRLVKEVGEIAQNVGRLKEALAQAQVELKGLNRRQLALQEEVQVKENTIYIDRVLCTHMRKSNPLRDGGDQGQWARACAPTPSAEDGTSHTD</sequence>
<feature type="chain" id="PRO_0000261167" description="Tektin-1">
    <location>
        <begin position="1"/>
        <end position="426"/>
    </location>
</feature>
<feature type="region of interest" description="Disordered" evidence="4">
    <location>
        <begin position="396"/>
        <end position="426"/>
    </location>
</feature>
<feature type="coiled-coil region" evidence="3">
    <location>
        <begin position="21"/>
        <end position="84"/>
    </location>
</feature>
<feature type="coiled-coil region" evidence="3">
    <location>
        <begin position="268"/>
        <end position="307"/>
    </location>
</feature>
<feature type="coiled-coil region" evidence="3">
    <location>
        <begin position="339"/>
        <end position="383"/>
    </location>
</feature>
<protein>
    <recommendedName>
        <fullName>Tektin-1</fullName>
    </recommendedName>
</protein>
<name>TEKT1_CANLF</name>
<evidence type="ECO:0000250" key="1">
    <source>
        <dbReference type="UniProtKB" id="Q32KZ9"/>
    </source>
</evidence>
<evidence type="ECO:0000250" key="2">
    <source>
        <dbReference type="UniProtKB" id="Q9DAJ2"/>
    </source>
</evidence>
<evidence type="ECO:0000255" key="3"/>
<evidence type="ECO:0000256" key="4">
    <source>
        <dbReference type="SAM" id="MobiDB-lite"/>
    </source>
</evidence>
<evidence type="ECO:0000305" key="5"/>
<gene>
    <name type="primary">TEKT1</name>
</gene>
<dbReference type="EMBL" id="AF191546">
    <property type="protein sequence ID" value="AAF05716.1"/>
    <property type="molecule type" value="mRNA"/>
</dbReference>
<dbReference type="SMR" id="Q9TTW3"/>
<dbReference type="FunCoup" id="Q9TTW3">
    <property type="interactions" value="17"/>
</dbReference>
<dbReference type="PaxDb" id="9612-ENSCAFP00000022556"/>
<dbReference type="eggNOG" id="KOG2685">
    <property type="taxonomic scope" value="Eukaryota"/>
</dbReference>
<dbReference type="InParanoid" id="Q9TTW3"/>
<dbReference type="OrthoDB" id="10054259at2759"/>
<dbReference type="Proteomes" id="UP000002254">
    <property type="component" value="Unplaced"/>
</dbReference>
<dbReference type="Proteomes" id="UP000694429">
    <property type="component" value="Unplaced"/>
</dbReference>
<dbReference type="Proteomes" id="UP000694542">
    <property type="component" value="Unplaced"/>
</dbReference>
<dbReference type="Proteomes" id="UP000805418">
    <property type="component" value="Unplaced"/>
</dbReference>
<dbReference type="GO" id="GO:0160111">
    <property type="term" value="C:axonemal A tubule inner sheath"/>
    <property type="evidence" value="ECO:0000250"/>
    <property type="project" value="UniProtKB"/>
</dbReference>
<dbReference type="GO" id="GO:0005879">
    <property type="term" value="C:axonemal microtubule"/>
    <property type="evidence" value="ECO:0000250"/>
    <property type="project" value="UniProtKB"/>
</dbReference>
<dbReference type="GO" id="GO:0015630">
    <property type="term" value="C:microtubule cytoskeleton"/>
    <property type="evidence" value="ECO:0000318"/>
    <property type="project" value="GO_Central"/>
</dbReference>
<dbReference type="GO" id="GO:0036126">
    <property type="term" value="C:sperm flagellum"/>
    <property type="evidence" value="ECO:0000250"/>
    <property type="project" value="UniProtKB"/>
</dbReference>
<dbReference type="GO" id="GO:0060271">
    <property type="term" value="P:cilium assembly"/>
    <property type="evidence" value="ECO:0000318"/>
    <property type="project" value="GO_Central"/>
</dbReference>
<dbReference type="GO" id="GO:0060294">
    <property type="term" value="P:cilium movement involved in cell motility"/>
    <property type="evidence" value="ECO:0000318"/>
    <property type="project" value="GO_Central"/>
</dbReference>
<dbReference type="GO" id="GO:0030317">
    <property type="term" value="P:flagellated sperm motility"/>
    <property type="evidence" value="ECO:0000250"/>
    <property type="project" value="UniProtKB"/>
</dbReference>
<dbReference type="InterPro" id="IPR048256">
    <property type="entry name" value="Tektin-like"/>
</dbReference>
<dbReference type="InterPro" id="IPR000435">
    <property type="entry name" value="Tektins"/>
</dbReference>
<dbReference type="PANTHER" id="PTHR19960">
    <property type="entry name" value="TEKTIN"/>
    <property type="match status" value="1"/>
</dbReference>
<dbReference type="PANTHER" id="PTHR19960:SF25">
    <property type="entry name" value="TEKTIN-1"/>
    <property type="match status" value="1"/>
</dbReference>
<dbReference type="Pfam" id="PF03148">
    <property type="entry name" value="Tektin"/>
    <property type="match status" value="1"/>
</dbReference>
<dbReference type="PRINTS" id="PR00511">
    <property type="entry name" value="TEKTIN"/>
</dbReference>
<organism>
    <name type="scientific">Canis lupus familiaris</name>
    <name type="common">Dog</name>
    <name type="synonym">Canis familiaris</name>
    <dbReference type="NCBI Taxonomy" id="9615"/>
    <lineage>
        <taxon>Eukaryota</taxon>
        <taxon>Metazoa</taxon>
        <taxon>Chordata</taxon>
        <taxon>Craniata</taxon>
        <taxon>Vertebrata</taxon>
        <taxon>Euteleostomi</taxon>
        <taxon>Mammalia</taxon>
        <taxon>Eutheria</taxon>
        <taxon>Laurasiatheria</taxon>
        <taxon>Carnivora</taxon>
        <taxon>Caniformia</taxon>
        <taxon>Canidae</taxon>
        <taxon>Canis</taxon>
    </lineage>
</organism>
<reference key="1">
    <citation type="journal article" date="2000" name="J. Vet. Med. Sci.">
        <title>Cloning of canine cDNA encoding tektin.</title>
        <authorList>
            <person name="Zhiyong M.A."/>
            <person name="Khatlani T.S."/>
            <person name="Sasaki K."/>
            <person name="Inokuma H."/>
            <person name="Onishi T."/>
        </authorList>
    </citation>
    <scope>NUCLEOTIDE SEQUENCE [MRNA]</scope>
    <source>
        <strain>Beagle</strain>
        <tissue>Testis</tissue>
    </source>
</reference>
<keyword id="KW-0966">Cell projection</keyword>
<keyword id="KW-0969">Cilium</keyword>
<keyword id="KW-0175">Coiled coil</keyword>
<keyword id="KW-0963">Cytoplasm</keyword>
<keyword id="KW-0206">Cytoskeleton</keyword>
<keyword id="KW-0282">Flagellum</keyword>
<keyword id="KW-0493">Microtubule</keyword>
<keyword id="KW-1185">Reference proteome</keyword>
<keyword id="KW-0832">Ubl conjugation</keyword>
<comment type="function">
    <text evidence="2">Microtubule inner protein (MIP) part of the dynein-decorated doublet microtubules (DMTs) in cilia and flagellar axoneme. Forms filamentous polymers in the walls of ciliary and flagellar microtubules.</text>
</comment>
<comment type="subunit">
    <text evidence="2">Microtubule inner protein component of sperm flagellar doublet microtubules.</text>
</comment>
<comment type="subcellular location">
    <subcellularLocation>
        <location evidence="1">Cytoplasm</location>
        <location evidence="1">Cytoskeleton</location>
        <location evidence="1">Cilium axoneme</location>
    </subcellularLocation>
    <subcellularLocation>
        <location evidence="2">Cytoplasm</location>
        <location evidence="2">Cytoskeleton</location>
        <location evidence="2">Flagellum axoneme</location>
    </subcellularLocation>
</comment>
<comment type="PTM">
    <text evidence="2">Ubiquitinated, leading to its degradation. Deubiquitinated by USP16, promoting its stability.</text>
</comment>
<comment type="similarity">
    <text evidence="5">Belongs to the tektin family.</text>
</comment>